<comment type="function">
    <text evidence="1">Catalyzes the condensation of carbamoyl phosphate and aspartate to form carbamoyl aspartate and inorganic phosphate, the committed step in the de novo pyrimidine nucleotide biosynthesis pathway.</text>
</comment>
<comment type="catalytic activity">
    <reaction evidence="1">
        <text>carbamoyl phosphate + L-aspartate = N-carbamoyl-L-aspartate + phosphate + H(+)</text>
        <dbReference type="Rhea" id="RHEA:20013"/>
        <dbReference type="ChEBI" id="CHEBI:15378"/>
        <dbReference type="ChEBI" id="CHEBI:29991"/>
        <dbReference type="ChEBI" id="CHEBI:32814"/>
        <dbReference type="ChEBI" id="CHEBI:43474"/>
        <dbReference type="ChEBI" id="CHEBI:58228"/>
        <dbReference type="EC" id="2.1.3.2"/>
    </reaction>
</comment>
<comment type="pathway">
    <text evidence="1">Pyrimidine metabolism; UMP biosynthesis via de novo pathway; (S)-dihydroorotate from bicarbonate: step 2/3.</text>
</comment>
<comment type="subunit">
    <text evidence="1">Heterododecamer (2C3:3R2) of six catalytic PyrB chains organized as two trimers (C3), and six regulatory PyrI chains organized as three dimers (R2).</text>
</comment>
<comment type="similarity">
    <text evidence="1">Belongs to the aspartate/ornithine carbamoyltransferase superfamily. ATCase family.</text>
</comment>
<dbReference type="EC" id="2.1.3.2" evidence="1"/>
<dbReference type="EMBL" id="BX572603">
    <property type="protein sequence ID" value="CAE28558.1"/>
    <property type="molecule type" value="Genomic_DNA"/>
</dbReference>
<dbReference type="RefSeq" id="WP_011158662.1">
    <property type="nucleotide sequence ID" value="NZ_CP116810.1"/>
</dbReference>
<dbReference type="SMR" id="Q6N565"/>
<dbReference type="STRING" id="258594.RPA3117"/>
<dbReference type="eggNOG" id="COG0540">
    <property type="taxonomic scope" value="Bacteria"/>
</dbReference>
<dbReference type="HOGENOM" id="CLU_043846_2_0_5"/>
<dbReference type="PhylomeDB" id="Q6N565"/>
<dbReference type="UniPathway" id="UPA00070">
    <property type="reaction ID" value="UER00116"/>
</dbReference>
<dbReference type="GO" id="GO:0005829">
    <property type="term" value="C:cytosol"/>
    <property type="evidence" value="ECO:0007669"/>
    <property type="project" value="TreeGrafter"/>
</dbReference>
<dbReference type="GO" id="GO:0016597">
    <property type="term" value="F:amino acid binding"/>
    <property type="evidence" value="ECO:0007669"/>
    <property type="project" value="InterPro"/>
</dbReference>
<dbReference type="GO" id="GO:0004070">
    <property type="term" value="F:aspartate carbamoyltransferase activity"/>
    <property type="evidence" value="ECO:0007669"/>
    <property type="project" value="UniProtKB-UniRule"/>
</dbReference>
<dbReference type="GO" id="GO:0006207">
    <property type="term" value="P:'de novo' pyrimidine nucleobase biosynthetic process"/>
    <property type="evidence" value="ECO:0007669"/>
    <property type="project" value="InterPro"/>
</dbReference>
<dbReference type="GO" id="GO:0044205">
    <property type="term" value="P:'de novo' UMP biosynthetic process"/>
    <property type="evidence" value="ECO:0007669"/>
    <property type="project" value="UniProtKB-UniRule"/>
</dbReference>
<dbReference type="GO" id="GO:0006520">
    <property type="term" value="P:amino acid metabolic process"/>
    <property type="evidence" value="ECO:0007669"/>
    <property type="project" value="InterPro"/>
</dbReference>
<dbReference type="FunFam" id="3.40.50.1370:FF:000007">
    <property type="entry name" value="Aspartate carbamoyltransferase"/>
    <property type="match status" value="1"/>
</dbReference>
<dbReference type="Gene3D" id="3.40.50.1370">
    <property type="entry name" value="Aspartate/ornithine carbamoyltransferase"/>
    <property type="match status" value="2"/>
</dbReference>
<dbReference type="HAMAP" id="MF_00001">
    <property type="entry name" value="Asp_carb_tr"/>
    <property type="match status" value="1"/>
</dbReference>
<dbReference type="InterPro" id="IPR006132">
    <property type="entry name" value="Asp/Orn_carbamoyltranf_P-bd"/>
</dbReference>
<dbReference type="InterPro" id="IPR006130">
    <property type="entry name" value="Asp/Orn_carbamoylTrfase"/>
</dbReference>
<dbReference type="InterPro" id="IPR036901">
    <property type="entry name" value="Asp/Orn_carbamoylTrfase_sf"/>
</dbReference>
<dbReference type="InterPro" id="IPR002082">
    <property type="entry name" value="Asp_carbamoyltransf"/>
</dbReference>
<dbReference type="InterPro" id="IPR006131">
    <property type="entry name" value="Asp_carbamoyltransf_Asp/Orn-bd"/>
</dbReference>
<dbReference type="NCBIfam" id="TIGR00670">
    <property type="entry name" value="asp_carb_tr"/>
    <property type="match status" value="1"/>
</dbReference>
<dbReference type="NCBIfam" id="NF002032">
    <property type="entry name" value="PRK00856.1"/>
    <property type="match status" value="1"/>
</dbReference>
<dbReference type="PANTHER" id="PTHR45753:SF6">
    <property type="entry name" value="ASPARTATE CARBAMOYLTRANSFERASE"/>
    <property type="match status" value="1"/>
</dbReference>
<dbReference type="PANTHER" id="PTHR45753">
    <property type="entry name" value="ORNITHINE CARBAMOYLTRANSFERASE, MITOCHONDRIAL"/>
    <property type="match status" value="1"/>
</dbReference>
<dbReference type="Pfam" id="PF00185">
    <property type="entry name" value="OTCace"/>
    <property type="match status" value="1"/>
</dbReference>
<dbReference type="Pfam" id="PF02729">
    <property type="entry name" value="OTCace_N"/>
    <property type="match status" value="1"/>
</dbReference>
<dbReference type="PRINTS" id="PR00100">
    <property type="entry name" value="AOTCASE"/>
</dbReference>
<dbReference type="PRINTS" id="PR00101">
    <property type="entry name" value="ATCASE"/>
</dbReference>
<dbReference type="SUPFAM" id="SSF53671">
    <property type="entry name" value="Aspartate/ornithine carbamoyltransferase"/>
    <property type="match status" value="1"/>
</dbReference>
<dbReference type="PROSITE" id="PS00097">
    <property type="entry name" value="CARBAMOYLTRANSFERASE"/>
    <property type="match status" value="1"/>
</dbReference>
<protein>
    <recommendedName>
        <fullName evidence="1">Aspartate carbamoyltransferase catalytic subunit</fullName>
        <ecNumber evidence="1">2.1.3.2</ecNumber>
    </recommendedName>
    <alternativeName>
        <fullName evidence="1">Aspartate transcarbamylase</fullName>
        <shortName evidence="1">ATCase</shortName>
    </alternativeName>
</protein>
<keyword id="KW-0665">Pyrimidine biosynthesis</keyword>
<keyword id="KW-0808">Transferase</keyword>
<gene>
    <name evidence="1" type="primary">pyrB</name>
    <name type="ordered locus">RPA3117</name>
</gene>
<evidence type="ECO:0000255" key="1">
    <source>
        <dbReference type="HAMAP-Rule" id="MF_00001"/>
    </source>
</evidence>
<sequence>MTPAPKSTFVLGHRHLLGIEGLSAADISGLLDLSEEYVELNRQVDKKRTSLRGRTQVNLFFEASTRTQSSFEIAGKRLGADVMNMSVSSSSMRKGETLMDTAVTLNAMHPDILVVRHHASGAVELLARKVDGSVINAGDGAHEHPTQALLDALTIRRNKGRLEGLVVAICGDVMHSRVARSNILLLNTMGARVRVVAPSTLLPAGIERMGVEVARDMREGLDGADIVMMLRLQRERMNGSFVPSSAEYFNYFGLDQKKLSYAKPDALVMHPGPMNRGVEIDSIVADGAQSVIREQVEMGVAVRMAVLEALARNLPNA</sequence>
<feature type="chain" id="PRO_0000113186" description="Aspartate carbamoyltransferase catalytic subunit">
    <location>
        <begin position="1"/>
        <end position="317"/>
    </location>
</feature>
<feature type="binding site" evidence="1">
    <location>
        <position position="66"/>
    </location>
    <ligand>
        <name>carbamoyl phosphate</name>
        <dbReference type="ChEBI" id="CHEBI:58228"/>
    </ligand>
</feature>
<feature type="binding site" evidence="1">
    <location>
        <position position="67"/>
    </location>
    <ligand>
        <name>carbamoyl phosphate</name>
        <dbReference type="ChEBI" id="CHEBI:58228"/>
    </ligand>
</feature>
<feature type="binding site" evidence="1">
    <location>
        <position position="94"/>
    </location>
    <ligand>
        <name>L-aspartate</name>
        <dbReference type="ChEBI" id="CHEBI:29991"/>
    </ligand>
</feature>
<feature type="binding site" evidence="1">
    <location>
        <position position="116"/>
    </location>
    <ligand>
        <name>carbamoyl phosphate</name>
        <dbReference type="ChEBI" id="CHEBI:58228"/>
    </ligand>
</feature>
<feature type="binding site" evidence="1">
    <location>
        <position position="144"/>
    </location>
    <ligand>
        <name>carbamoyl phosphate</name>
        <dbReference type="ChEBI" id="CHEBI:58228"/>
    </ligand>
</feature>
<feature type="binding site" evidence="1">
    <location>
        <position position="147"/>
    </location>
    <ligand>
        <name>carbamoyl phosphate</name>
        <dbReference type="ChEBI" id="CHEBI:58228"/>
    </ligand>
</feature>
<feature type="binding site" evidence="1">
    <location>
        <position position="177"/>
    </location>
    <ligand>
        <name>L-aspartate</name>
        <dbReference type="ChEBI" id="CHEBI:29991"/>
    </ligand>
</feature>
<feature type="binding site" evidence="1">
    <location>
        <position position="231"/>
    </location>
    <ligand>
        <name>L-aspartate</name>
        <dbReference type="ChEBI" id="CHEBI:29991"/>
    </ligand>
</feature>
<feature type="binding site" evidence="1">
    <location>
        <position position="272"/>
    </location>
    <ligand>
        <name>carbamoyl phosphate</name>
        <dbReference type="ChEBI" id="CHEBI:58228"/>
    </ligand>
</feature>
<feature type="binding site" evidence="1">
    <location>
        <position position="273"/>
    </location>
    <ligand>
        <name>carbamoyl phosphate</name>
        <dbReference type="ChEBI" id="CHEBI:58228"/>
    </ligand>
</feature>
<name>PYRB_RHOPA</name>
<reference key="1">
    <citation type="journal article" date="2004" name="Nat. Biotechnol.">
        <title>Complete genome sequence of the metabolically versatile photosynthetic bacterium Rhodopseudomonas palustris.</title>
        <authorList>
            <person name="Larimer F.W."/>
            <person name="Chain P."/>
            <person name="Hauser L."/>
            <person name="Lamerdin J.E."/>
            <person name="Malfatti S."/>
            <person name="Do L."/>
            <person name="Land M.L."/>
            <person name="Pelletier D.A."/>
            <person name="Beatty J.T."/>
            <person name="Lang A.S."/>
            <person name="Tabita F.R."/>
            <person name="Gibson J.L."/>
            <person name="Hanson T.E."/>
            <person name="Bobst C."/>
            <person name="Torres y Torres J.L."/>
            <person name="Peres C."/>
            <person name="Harrison F.H."/>
            <person name="Gibson J."/>
            <person name="Harwood C.S."/>
        </authorList>
    </citation>
    <scope>NUCLEOTIDE SEQUENCE [LARGE SCALE GENOMIC DNA]</scope>
    <source>
        <strain>ATCC BAA-98 / CGA009</strain>
    </source>
</reference>
<organism>
    <name type="scientific">Rhodopseudomonas palustris (strain ATCC BAA-98 / CGA009)</name>
    <dbReference type="NCBI Taxonomy" id="258594"/>
    <lineage>
        <taxon>Bacteria</taxon>
        <taxon>Pseudomonadati</taxon>
        <taxon>Pseudomonadota</taxon>
        <taxon>Alphaproteobacteria</taxon>
        <taxon>Hyphomicrobiales</taxon>
        <taxon>Nitrobacteraceae</taxon>
        <taxon>Rhodopseudomonas</taxon>
    </lineage>
</organism>
<accession>Q6N565</accession>
<proteinExistence type="inferred from homology"/>